<dbReference type="EC" id="3.6.1.66" evidence="1"/>
<dbReference type="EMBL" id="AP009179">
    <property type="protein sequence ID" value="BAF71128.1"/>
    <property type="molecule type" value="Genomic_DNA"/>
</dbReference>
<dbReference type="RefSeq" id="WP_011979861.1">
    <property type="nucleotide sequence ID" value="NC_009663.1"/>
</dbReference>
<dbReference type="SMR" id="A6Q6L9"/>
<dbReference type="STRING" id="387093.SUN_0168"/>
<dbReference type="KEGG" id="sun:SUN_0168"/>
<dbReference type="eggNOG" id="COG0127">
    <property type="taxonomic scope" value="Bacteria"/>
</dbReference>
<dbReference type="HOGENOM" id="CLU_082080_0_2_7"/>
<dbReference type="OrthoDB" id="9807456at2"/>
<dbReference type="Proteomes" id="UP000006378">
    <property type="component" value="Chromosome"/>
</dbReference>
<dbReference type="GO" id="GO:0005829">
    <property type="term" value="C:cytosol"/>
    <property type="evidence" value="ECO:0007669"/>
    <property type="project" value="TreeGrafter"/>
</dbReference>
<dbReference type="GO" id="GO:0035870">
    <property type="term" value="F:dITP diphosphatase activity"/>
    <property type="evidence" value="ECO:0007669"/>
    <property type="project" value="RHEA"/>
</dbReference>
<dbReference type="GO" id="GO:0036220">
    <property type="term" value="F:ITP diphosphatase activity"/>
    <property type="evidence" value="ECO:0007669"/>
    <property type="project" value="UniProtKB-EC"/>
</dbReference>
<dbReference type="GO" id="GO:0046872">
    <property type="term" value="F:metal ion binding"/>
    <property type="evidence" value="ECO:0007669"/>
    <property type="project" value="UniProtKB-KW"/>
</dbReference>
<dbReference type="GO" id="GO:0000166">
    <property type="term" value="F:nucleotide binding"/>
    <property type="evidence" value="ECO:0007669"/>
    <property type="project" value="UniProtKB-KW"/>
</dbReference>
<dbReference type="GO" id="GO:0017111">
    <property type="term" value="F:ribonucleoside triphosphate phosphatase activity"/>
    <property type="evidence" value="ECO:0007669"/>
    <property type="project" value="InterPro"/>
</dbReference>
<dbReference type="GO" id="GO:0036222">
    <property type="term" value="F:XTP diphosphatase activity"/>
    <property type="evidence" value="ECO:0007669"/>
    <property type="project" value="RHEA"/>
</dbReference>
<dbReference type="GO" id="GO:0009117">
    <property type="term" value="P:nucleotide metabolic process"/>
    <property type="evidence" value="ECO:0007669"/>
    <property type="project" value="UniProtKB-KW"/>
</dbReference>
<dbReference type="GO" id="GO:0009146">
    <property type="term" value="P:purine nucleoside triphosphate catabolic process"/>
    <property type="evidence" value="ECO:0007669"/>
    <property type="project" value="UniProtKB-UniRule"/>
</dbReference>
<dbReference type="CDD" id="cd00515">
    <property type="entry name" value="HAM1"/>
    <property type="match status" value="1"/>
</dbReference>
<dbReference type="FunFam" id="3.90.950.10:FF:000001">
    <property type="entry name" value="dITP/XTP pyrophosphatase"/>
    <property type="match status" value="1"/>
</dbReference>
<dbReference type="Gene3D" id="3.90.950.10">
    <property type="match status" value="1"/>
</dbReference>
<dbReference type="HAMAP" id="MF_01405">
    <property type="entry name" value="Non_canon_purine_NTPase"/>
    <property type="match status" value="1"/>
</dbReference>
<dbReference type="InterPro" id="IPR020922">
    <property type="entry name" value="dITP/XTP_pyrophosphatase"/>
</dbReference>
<dbReference type="InterPro" id="IPR029001">
    <property type="entry name" value="ITPase-like_fam"/>
</dbReference>
<dbReference type="InterPro" id="IPR002637">
    <property type="entry name" value="RdgB/HAM1"/>
</dbReference>
<dbReference type="NCBIfam" id="TIGR00042">
    <property type="entry name" value="RdgB/HAM1 family non-canonical purine NTP pyrophosphatase"/>
    <property type="match status" value="1"/>
</dbReference>
<dbReference type="PANTHER" id="PTHR11067:SF9">
    <property type="entry name" value="INOSINE TRIPHOSPHATE PYROPHOSPHATASE"/>
    <property type="match status" value="1"/>
</dbReference>
<dbReference type="PANTHER" id="PTHR11067">
    <property type="entry name" value="INOSINE TRIPHOSPHATE PYROPHOSPHATASE/HAM1 PROTEIN"/>
    <property type="match status" value="1"/>
</dbReference>
<dbReference type="Pfam" id="PF01725">
    <property type="entry name" value="Ham1p_like"/>
    <property type="match status" value="1"/>
</dbReference>
<dbReference type="SUPFAM" id="SSF52972">
    <property type="entry name" value="ITPase-like"/>
    <property type="match status" value="1"/>
</dbReference>
<organism>
    <name type="scientific">Sulfurovum sp. (strain NBC37-1)</name>
    <dbReference type="NCBI Taxonomy" id="387093"/>
    <lineage>
        <taxon>Bacteria</taxon>
        <taxon>Pseudomonadati</taxon>
        <taxon>Campylobacterota</taxon>
        <taxon>Epsilonproteobacteria</taxon>
        <taxon>Campylobacterales</taxon>
        <taxon>Sulfurovaceae</taxon>
        <taxon>Sulfurovum</taxon>
    </lineage>
</organism>
<feature type="chain" id="PRO_1000068432" description="dITP/XTP pyrophosphatase">
    <location>
        <begin position="1"/>
        <end position="209"/>
    </location>
</feature>
<feature type="active site" description="Proton acceptor" evidence="1">
    <location>
        <position position="73"/>
    </location>
</feature>
<feature type="binding site" evidence="1">
    <location>
        <begin position="7"/>
        <end position="12"/>
    </location>
    <ligand>
        <name>substrate</name>
    </ligand>
</feature>
<feature type="binding site" evidence="1">
    <location>
        <position position="73"/>
    </location>
    <ligand>
        <name>Mg(2+)</name>
        <dbReference type="ChEBI" id="CHEBI:18420"/>
    </ligand>
</feature>
<feature type="binding site" evidence="1">
    <location>
        <position position="74"/>
    </location>
    <ligand>
        <name>substrate</name>
    </ligand>
</feature>
<feature type="binding site" evidence="1">
    <location>
        <begin position="155"/>
        <end position="158"/>
    </location>
    <ligand>
        <name>substrate</name>
    </ligand>
</feature>
<feature type="binding site" evidence="1">
    <location>
        <position position="178"/>
    </location>
    <ligand>
        <name>substrate</name>
    </ligand>
</feature>
<feature type="binding site" evidence="1">
    <location>
        <begin position="183"/>
        <end position="184"/>
    </location>
    <ligand>
        <name>substrate</name>
    </ligand>
</feature>
<proteinExistence type="inferred from homology"/>
<sequence>MKIVLATGNKGKLREFRQMCQDEVLPFSDLLGMFEIVEDGDTFAANALIKARTIYNKLKEKHPEEAYVVIADDSGISVPALGGIPGIYSARYAGEGASDKENLYKLIDTLKEKDFKSTPAYYTAAIAIVSDLGEYVVHGWMHGNVIDEARGDKGFGYDPMFIPAGFDKTLGEMDDGVKTAISHRGKALSLAKPIIQMLKNKEKNASDLK</sequence>
<reference key="1">
    <citation type="journal article" date="2007" name="Proc. Natl. Acad. Sci. U.S.A.">
        <title>Deep-sea vent epsilon-proteobacterial genomes provide insights into emergence of pathogens.</title>
        <authorList>
            <person name="Nakagawa S."/>
            <person name="Takaki Y."/>
            <person name="Shimamura S."/>
            <person name="Reysenbach A.-L."/>
            <person name="Takai K."/>
            <person name="Horikoshi K."/>
        </authorList>
    </citation>
    <scope>NUCLEOTIDE SEQUENCE [LARGE SCALE GENOMIC DNA]</scope>
    <source>
        <strain>NBC37-1</strain>
    </source>
</reference>
<name>IXTPA_SULNB</name>
<keyword id="KW-0378">Hydrolase</keyword>
<keyword id="KW-0460">Magnesium</keyword>
<keyword id="KW-0479">Metal-binding</keyword>
<keyword id="KW-0546">Nucleotide metabolism</keyword>
<keyword id="KW-0547">Nucleotide-binding</keyword>
<gene>
    <name type="ordered locus">SUN_0168</name>
</gene>
<comment type="function">
    <text evidence="1">Pyrophosphatase that catalyzes the hydrolysis of nucleoside triphosphates to their monophosphate derivatives, with a high preference for the non-canonical purine nucleotides XTP (xanthosine triphosphate), dITP (deoxyinosine triphosphate) and ITP. Seems to function as a house-cleaning enzyme that removes non-canonical purine nucleotides from the nucleotide pool, thus preventing their incorporation into DNA/RNA and avoiding chromosomal lesions.</text>
</comment>
<comment type="catalytic activity">
    <reaction evidence="1">
        <text>XTP + H2O = XMP + diphosphate + H(+)</text>
        <dbReference type="Rhea" id="RHEA:28610"/>
        <dbReference type="ChEBI" id="CHEBI:15377"/>
        <dbReference type="ChEBI" id="CHEBI:15378"/>
        <dbReference type="ChEBI" id="CHEBI:33019"/>
        <dbReference type="ChEBI" id="CHEBI:57464"/>
        <dbReference type="ChEBI" id="CHEBI:61314"/>
        <dbReference type="EC" id="3.6.1.66"/>
    </reaction>
</comment>
<comment type="catalytic activity">
    <reaction evidence="1">
        <text>dITP + H2O = dIMP + diphosphate + H(+)</text>
        <dbReference type="Rhea" id="RHEA:28342"/>
        <dbReference type="ChEBI" id="CHEBI:15377"/>
        <dbReference type="ChEBI" id="CHEBI:15378"/>
        <dbReference type="ChEBI" id="CHEBI:33019"/>
        <dbReference type="ChEBI" id="CHEBI:61194"/>
        <dbReference type="ChEBI" id="CHEBI:61382"/>
        <dbReference type="EC" id="3.6.1.66"/>
    </reaction>
</comment>
<comment type="catalytic activity">
    <reaction evidence="1">
        <text>ITP + H2O = IMP + diphosphate + H(+)</text>
        <dbReference type="Rhea" id="RHEA:29399"/>
        <dbReference type="ChEBI" id="CHEBI:15377"/>
        <dbReference type="ChEBI" id="CHEBI:15378"/>
        <dbReference type="ChEBI" id="CHEBI:33019"/>
        <dbReference type="ChEBI" id="CHEBI:58053"/>
        <dbReference type="ChEBI" id="CHEBI:61402"/>
        <dbReference type="EC" id="3.6.1.66"/>
    </reaction>
</comment>
<comment type="cofactor">
    <cofactor evidence="1">
        <name>Mg(2+)</name>
        <dbReference type="ChEBI" id="CHEBI:18420"/>
    </cofactor>
    <text evidence="1">Binds 1 Mg(2+) ion per subunit.</text>
</comment>
<comment type="subunit">
    <text evidence="1">Homodimer.</text>
</comment>
<comment type="similarity">
    <text evidence="1">Belongs to the HAM1 NTPase family.</text>
</comment>
<accession>A6Q6L9</accession>
<protein>
    <recommendedName>
        <fullName evidence="1">dITP/XTP pyrophosphatase</fullName>
        <ecNumber evidence="1">3.6.1.66</ecNumber>
    </recommendedName>
    <alternativeName>
        <fullName evidence="1">Non-canonical purine NTP pyrophosphatase</fullName>
    </alternativeName>
    <alternativeName>
        <fullName evidence="1">Non-standard purine NTP pyrophosphatase</fullName>
    </alternativeName>
    <alternativeName>
        <fullName evidence="1">Nucleoside-triphosphate diphosphatase</fullName>
    </alternativeName>
    <alternativeName>
        <fullName evidence="1">Nucleoside-triphosphate pyrophosphatase</fullName>
        <shortName evidence="1">NTPase</shortName>
    </alternativeName>
</protein>
<evidence type="ECO:0000255" key="1">
    <source>
        <dbReference type="HAMAP-Rule" id="MF_01405"/>
    </source>
</evidence>